<comment type="function">
    <text evidence="1">Catalyzes the thiamine diphosphate-dependent decarboxylation of 2-oxoglutarate and the subsequent addition of the resulting succinic semialdehyde-thiamine pyrophosphate anion to isochorismate to yield 2-succinyl-5-enolpyruvyl-6-hydroxy-3-cyclohexene-1-carboxylate (SEPHCHC).</text>
</comment>
<comment type="catalytic activity">
    <reaction evidence="1">
        <text>isochorismate + 2-oxoglutarate + H(+) = 5-enolpyruvoyl-6-hydroxy-2-succinyl-cyclohex-3-ene-1-carboxylate + CO2</text>
        <dbReference type="Rhea" id="RHEA:25593"/>
        <dbReference type="ChEBI" id="CHEBI:15378"/>
        <dbReference type="ChEBI" id="CHEBI:16526"/>
        <dbReference type="ChEBI" id="CHEBI:16810"/>
        <dbReference type="ChEBI" id="CHEBI:29780"/>
        <dbReference type="ChEBI" id="CHEBI:58818"/>
        <dbReference type="EC" id="2.2.1.9"/>
    </reaction>
</comment>
<comment type="cofactor">
    <cofactor evidence="1">
        <name>Mg(2+)</name>
        <dbReference type="ChEBI" id="CHEBI:18420"/>
    </cofactor>
    <cofactor evidence="1">
        <name>Mn(2+)</name>
        <dbReference type="ChEBI" id="CHEBI:29035"/>
    </cofactor>
</comment>
<comment type="cofactor">
    <cofactor evidence="1">
        <name>thiamine diphosphate</name>
        <dbReference type="ChEBI" id="CHEBI:58937"/>
    </cofactor>
    <text evidence="1">Binds 1 thiamine pyrophosphate per subunit.</text>
</comment>
<comment type="pathway">
    <text evidence="1">Quinol/quinone metabolism; 1,4-dihydroxy-2-naphthoate biosynthesis; 1,4-dihydroxy-2-naphthoate from chorismate: step 2/7.</text>
</comment>
<comment type="pathway">
    <text evidence="1">Quinol/quinone metabolism; menaquinone biosynthesis.</text>
</comment>
<comment type="subunit">
    <text evidence="1">Homodimer.</text>
</comment>
<comment type="similarity">
    <text evidence="1">Belongs to the TPP enzyme family. MenD subfamily.</text>
</comment>
<keyword id="KW-0460">Magnesium</keyword>
<keyword id="KW-0464">Manganese</keyword>
<keyword id="KW-0474">Menaquinone biosynthesis</keyword>
<keyword id="KW-0479">Metal-binding</keyword>
<keyword id="KW-1185">Reference proteome</keyword>
<keyword id="KW-0786">Thiamine pyrophosphate</keyword>
<keyword id="KW-0808">Transferase</keyword>
<name>MEND_KINRD</name>
<gene>
    <name evidence="1" type="primary">menD</name>
    <name type="ordered locus">Krad_0646</name>
</gene>
<sequence>MNPSTALATVLVDTLVRLGLRHLVLSPGSRSAPLAYAAARAADEGRLTLHVRVDERSAGFLALGLARAGELVAVVTTSGTAVANLHPAVLEAHHAGVPLVVLSADRPHELRGSGASQTADAQARMFLPSVRYSADVPAPVDPDRQAPAWRSLLSRAVAFARGLRGDGPGPVHLNVGFADPLTPSPGDVPPGPGLTQVHGPGAPAPVALERGPRTLVLAGDAPDPATGAAARELAESAGWPLLAEPSSGARGGERAVGPYRLLLDAVDAEGPLGAVERVVLFGHPTLSRPVTRLLARDDVELVVVSAAGTWSDAGFRAARVVPAAQVQGPPGAGEQEFAARWDRAGKLAADAVDAALDAEAGLSGPWAAREVVAACAADGSTLVVAASNAIRDVDLTARPLGVRTVSNRGLAGIDGTTATAEGVALATGPTRLLLGDLAFLHDANALLPVPGEVRPDLTVVVVNDDGGGIFETLEHASAVDRATFERVVATPHGVDVAALCAAFGVAHSRPATRAEALAALTARPRGLRVVELVTARDRVRPRLERIAAAVRAAVA</sequence>
<evidence type="ECO:0000255" key="1">
    <source>
        <dbReference type="HAMAP-Rule" id="MF_01659"/>
    </source>
</evidence>
<protein>
    <recommendedName>
        <fullName evidence="1">2-succinyl-5-enolpyruvyl-6-hydroxy-3-cyclohexene-1-carboxylate synthase</fullName>
        <shortName evidence="1">SEPHCHC synthase</shortName>
        <ecNumber evidence="1">2.2.1.9</ecNumber>
    </recommendedName>
    <alternativeName>
        <fullName evidence="1">Menaquinone biosynthesis protein MenD</fullName>
    </alternativeName>
</protein>
<dbReference type="EC" id="2.2.1.9" evidence="1"/>
<dbReference type="EMBL" id="CP000750">
    <property type="protein sequence ID" value="ABS02135.1"/>
    <property type="molecule type" value="Genomic_DNA"/>
</dbReference>
<dbReference type="RefSeq" id="WP_012085023.1">
    <property type="nucleotide sequence ID" value="NC_009664.2"/>
</dbReference>
<dbReference type="SMR" id="A6W5P6"/>
<dbReference type="STRING" id="266940.Krad_0646"/>
<dbReference type="KEGG" id="kra:Krad_0646"/>
<dbReference type="eggNOG" id="COG1165">
    <property type="taxonomic scope" value="Bacteria"/>
</dbReference>
<dbReference type="HOGENOM" id="CLU_006051_4_0_11"/>
<dbReference type="OrthoDB" id="9791859at2"/>
<dbReference type="UniPathway" id="UPA00079"/>
<dbReference type="UniPathway" id="UPA01057">
    <property type="reaction ID" value="UER00164"/>
</dbReference>
<dbReference type="Proteomes" id="UP000001116">
    <property type="component" value="Chromosome"/>
</dbReference>
<dbReference type="GO" id="GO:0070204">
    <property type="term" value="F:2-succinyl-5-enolpyruvyl-6-hydroxy-3-cyclohexene-1-carboxylic-acid synthase activity"/>
    <property type="evidence" value="ECO:0007669"/>
    <property type="project" value="UniProtKB-UniRule"/>
</dbReference>
<dbReference type="GO" id="GO:0000287">
    <property type="term" value="F:magnesium ion binding"/>
    <property type="evidence" value="ECO:0007669"/>
    <property type="project" value="UniProtKB-UniRule"/>
</dbReference>
<dbReference type="GO" id="GO:0030145">
    <property type="term" value="F:manganese ion binding"/>
    <property type="evidence" value="ECO:0007669"/>
    <property type="project" value="UniProtKB-UniRule"/>
</dbReference>
<dbReference type="GO" id="GO:0030976">
    <property type="term" value="F:thiamine pyrophosphate binding"/>
    <property type="evidence" value="ECO:0007669"/>
    <property type="project" value="UniProtKB-UniRule"/>
</dbReference>
<dbReference type="GO" id="GO:0009234">
    <property type="term" value="P:menaquinone biosynthetic process"/>
    <property type="evidence" value="ECO:0007669"/>
    <property type="project" value="UniProtKB-UniRule"/>
</dbReference>
<dbReference type="CDD" id="cd07037">
    <property type="entry name" value="TPP_PYR_MenD"/>
    <property type="match status" value="1"/>
</dbReference>
<dbReference type="CDD" id="cd02009">
    <property type="entry name" value="TPP_SHCHC_synthase"/>
    <property type="match status" value="1"/>
</dbReference>
<dbReference type="Gene3D" id="3.40.50.970">
    <property type="match status" value="2"/>
</dbReference>
<dbReference type="Gene3D" id="3.40.50.1220">
    <property type="entry name" value="TPP-binding domain"/>
    <property type="match status" value="1"/>
</dbReference>
<dbReference type="HAMAP" id="MF_01659">
    <property type="entry name" value="MenD"/>
    <property type="match status" value="1"/>
</dbReference>
<dbReference type="InterPro" id="IPR004433">
    <property type="entry name" value="MenaQ_synth_MenD"/>
</dbReference>
<dbReference type="InterPro" id="IPR029061">
    <property type="entry name" value="THDP-binding"/>
</dbReference>
<dbReference type="InterPro" id="IPR012001">
    <property type="entry name" value="Thiamin_PyroP_enz_TPP-bd_dom"/>
</dbReference>
<dbReference type="NCBIfam" id="TIGR00173">
    <property type="entry name" value="menD"/>
    <property type="match status" value="1"/>
</dbReference>
<dbReference type="PANTHER" id="PTHR42916">
    <property type="entry name" value="2-SUCCINYL-5-ENOLPYRUVYL-6-HYDROXY-3-CYCLOHEXENE-1-CARBOXYLATE SYNTHASE"/>
    <property type="match status" value="1"/>
</dbReference>
<dbReference type="PANTHER" id="PTHR42916:SF1">
    <property type="entry name" value="PROTEIN PHYLLO, CHLOROPLASTIC"/>
    <property type="match status" value="1"/>
</dbReference>
<dbReference type="Pfam" id="PF02776">
    <property type="entry name" value="TPP_enzyme_N"/>
    <property type="match status" value="1"/>
</dbReference>
<dbReference type="PIRSF" id="PIRSF004983">
    <property type="entry name" value="MenD"/>
    <property type="match status" value="1"/>
</dbReference>
<dbReference type="SUPFAM" id="SSF52518">
    <property type="entry name" value="Thiamin diphosphate-binding fold (THDP-binding)"/>
    <property type="match status" value="2"/>
</dbReference>
<reference key="1">
    <citation type="journal article" date="2008" name="PLoS ONE">
        <title>Survival in nuclear waste, extreme resistance, and potential applications gleaned from the genome sequence of Kineococcus radiotolerans SRS30216.</title>
        <authorList>
            <person name="Bagwell C.E."/>
            <person name="Bhat S."/>
            <person name="Hawkins G.M."/>
            <person name="Smith B.W."/>
            <person name="Biswas T."/>
            <person name="Hoover T.R."/>
            <person name="Saunders E."/>
            <person name="Han C.S."/>
            <person name="Tsodikov O.V."/>
            <person name="Shimkets L.J."/>
        </authorList>
    </citation>
    <scope>NUCLEOTIDE SEQUENCE [LARGE SCALE GENOMIC DNA]</scope>
    <source>
        <strain>ATCC BAA-149 / DSM 14245 / SRS30216</strain>
    </source>
</reference>
<organism>
    <name type="scientific">Kineococcus radiotolerans (strain ATCC BAA-149 / DSM 14245 / SRS30216)</name>
    <dbReference type="NCBI Taxonomy" id="266940"/>
    <lineage>
        <taxon>Bacteria</taxon>
        <taxon>Bacillati</taxon>
        <taxon>Actinomycetota</taxon>
        <taxon>Actinomycetes</taxon>
        <taxon>Kineosporiales</taxon>
        <taxon>Kineosporiaceae</taxon>
        <taxon>Kineococcus</taxon>
    </lineage>
</organism>
<proteinExistence type="inferred from homology"/>
<feature type="chain" id="PRO_0000341759" description="2-succinyl-5-enolpyruvyl-6-hydroxy-3-cyclohexene-1-carboxylate synthase">
    <location>
        <begin position="1"/>
        <end position="555"/>
    </location>
</feature>
<accession>A6W5P6</accession>